<comment type="function">
    <text evidence="1">Component of the Mediator complex, a coactivator involved in the regulated transcription of nearly all RNA polymerase II-dependent genes. Mediator functions as a bridge to convey information from gene-specific regulatory proteins to the basal RNA polymerase II transcription machinery. Mediator is recruited to promoters by direct interactions with regulatory proteins and serves as a scaffold for the assembly of a functional preinitiation complex with RNA polymerase II and the general transcription factors (By similarity).</text>
</comment>
<comment type="subunit">
    <text evidence="1">Component of the Mediator complex.</text>
</comment>
<comment type="subcellular location">
    <subcellularLocation>
        <location evidence="1">Nucleus</location>
    </subcellularLocation>
</comment>
<comment type="similarity">
    <text evidence="3">Belongs to the Mediator complex subunit 1 family.</text>
</comment>
<name>MED1_CANGA</name>
<proteinExistence type="inferred from homology"/>
<keyword id="KW-0010">Activator</keyword>
<keyword id="KW-0539">Nucleus</keyword>
<keyword id="KW-1185">Reference proteome</keyword>
<keyword id="KW-0804">Transcription</keyword>
<keyword id="KW-0805">Transcription regulation</keyword>
<dbReference type="EMBL" id="CR380950">
    <property type="protein sequence ID" value="CAG58386.1"/>
    <property type="molecule type" value="Genomic_DNA"/>
</dbReference>
<dbReference type="RefSeq" id="XP_445475.1">
    <property type="nucleotide sequence ID" value="XM_445475.1"/>
</dbReference>
<dbReference type="SMR" id="Q6FWB9"/>
<dbReference type="FunCoup" id="Q6FWB9">
    <property type="interactions" value="223"/>
</dbReference>
<dbReference type="STRING" id="284593.Q6FWB9"/>
<dbReference type="EnsemblFungi" id="CAGL0D01386g-T">
    <property type="protein sequence ID" value="CAGL0D01386g-T-p1"/>
    <property type="gene ID" value="CAGL0D01386g"/>
</dbReference>
<dbReference type="GeneID" id="2887120"/>
<dbReference type="KEGG" id="cgr:2887120"/>
<dbReference type="CGD" id="CAL0128307">
    <property type="gene designation" value="MED1"/>
</dbReference>
<dbReference type="VEuPathDB" id="FungiDB:CAGL0D01386g"/>
<dbReference type="eggNOG" id="ENOG502QW0Y">
    <property type="taxonomic scope" value="Eukaryota"/>
</dbReference>
<dbReference type="HOGENOM" id="CLU_021764_0_0_1"/>
<dbReference type="InParanoid" id="Q6FWB9"/>
<dbReference type="OMA" id="NDKFGIY"/>
<dbReference type="Proteomes" id="UP000002428">
    <property type="component" value="Chromosome D"/>
</dbReference>
<dbReference type="GO" id="GO:0070847">
    <property type="term" value="C:core mediator complex"/>
    <property type="evidence" value="ECO:0007669"/>
    <property type="project" value="EnsemblFungi"/>
</dbReference>
<dbReference type="GO" id="GO:0016592">
    <property type="term" value="C:mediator complex"/>
    <property type="evidence" value="ECO:0007669"/>
    <property type="project" value="InterPro"/>
</dbReference>
<dbReference type="GO" id="GO:0003712">
    <property type="term" value="F:transcription coregulator activity"/>
    <property type="evidence" value="ECO:0007669"/>
    <property type="project" value="InterPro"/>
</dbReference>
<dbReference type="GO" id="GO:0000122">
    <property type="term" value="P:negative regulation of transcription by RNA polymerase II"/>
    <property type="evidence" value="ECO:0007669"/>
    <property type="project" value="EnsemblFungi"/>
</dbReference>
<dbReference type="GO" id="GO:0032968">
    <property type="term" value="P:positive regulation of transcription elongation by RNA polymerase II"/>
    <property type="evidence" value="ECO:0007669"/>
    <property type="project" value="EnsemblFungi"/>
</dbReference>
<dbReference type="GO" id="GO:0060261">
    <property type="term" value="P:positive regulation of transcription initiation by RNA polymerase II"/>
    <property type="evidence" value="ECO:0007669"/>
    <property type="project" value="EnsemblFungi"/>
</dbReference>
<dbReference type="GO" id="GO:0051123">
    <property type="term" value="P:RNA polymerase II preinitiation complex assembly"/>
    <property type="evidence" value="ECO:0007669"/>
    <property type="project" value="EnsemblFungi"/>
</dbReference>
<dbReference type="InterPro" id="IPR019680">
    <property type="entry name" value="Mediator_Med1"/>
</dbReference>
<dbReference type="Pfam" id="PF10744">
    <property type="entry name" value="Med1"/>
    <property type="match status" value="1"/>
</dbReference>
<organism>
    <name type="scientific">Candida glabrata (strain ATCC 2001 / BCRC 20586 / JCM 3761 / NBRC 0622 / NRRL Y-65 / CBS 138)</name>
    <name type="common">Yeast</name>
    <name type="synonym">Nakaseomyces glabratus</name>
    <dbReference type="NCBI Taxonomy" id="284593"/>
    <lineage>
        <taxon>Eukaryota</taxon>
        <taxon>Fungi</taxon>
        <taxon>Dikarya</taxon>
        <taxon>Ascomycota</taxon>
        <taxon>Saccharomycotina</taxon>
        <taxon>Saccharomycetes</taxon>
        <taxon>Saccharomycetales</taxon>
        <taxon>Saccharomycetaceae</taxon>
        <taxon>Nakaseomyces</taxon>
    </lineage>
</organism>
<accession>Q6FWB9</accession>
<gene>
    <name type="primary">MED1</name>
    <name type="ordered locus">CAGL0D01386g</name>
</gene>
<evidence type="ECO:0000250" key="1"/>
<evidence type="ECO:0000256" key="2">
    <source>
        <dbReference type="SAM" id="MobiDB-lite"/>
    </source>
</evidence>
<evidence type="ECO:0000305" key="3"/>
<feature type="chain" id="PRO_0000302029" description="Mediator of RNA polymerase II transcription subunit 1">
    <location>
        <begin position="1"/>
        <end position="565"/>
    </location>
</feature>
<feature type="region of interest" description="Disordered" evidence="2">
    <location>
        <begin position="141"/>
        <end position="170"/>
    </location>
</feature>
<reference key="1">
    <citation type="journal article" date="2004" name="Nature">
        <title>Genome evolution in yeasts.</title>
        <authorList>
            <person name="Dujon B."/>
            <person name="Sherman D."/>
            <person name="Fischer G."/>
            <person name="Durrens P."/>
            <person name="Casaregola S."/>
            <person name="Lafontaine I."/>
            <person name="de Montigny J."/>
            <person name="Marck C."/>
            <person name="Neuveglise C."/>
            <person name="Talla E."/>
            <person name="Goffard N."/>
            <person name="Frangeul L."/>
            <person name="Aigle M."/>
            <person name="Anthouard V."/>
            <person name="Babour A."/>
            <person name="Barbe V."/>
            <person name="Barnay S."/>
            <person name="Blanchin S."/>
            <person name="Beckerich J.-M."/>
            <person name="Beyne E."/>
            <person name="Bleykasten C."/>
            <person name="Boisrame A."/>
            <person name="Boyer J."/>
            <person name="Cattolico L."/>
            <person name="Confanioleri F."/>
            <person name="de Daruvar A."/>
            <person name="Despons L."/>
            <person name="Fabre E."/>
            <person name="Fairhead C."/>
            <person name="Ferry-Dumazet H."/>
            <person name="Groppi A."/>
            <person name="Hantraye F."/>
            <person name="Hennequin C."/>
            <person name="Jauniaux N."/>
            <person name="Joyet P."/>
            <person name="Kachouri R."/>
            <person name="Kerrest A."/>
            <person name="Koszul R."/>
            <person name="Lemaire M."/>
            <person name="Lesur I."/>
            <person name="Ma L."/>
            <person name="Muller H."/>
            <person name="Nicaud J.-M."/>
            <person name="Nikolski M."/>
            <person name="Oztas S."/>
            <person name="Ozier-Kalogeropoulos O."/>
            <person name="Pellenz S."/>
            <person name="Potier S."/>
            <person name="Richard G.-F."/>
            <person name="Straub M.-L."/>
            <person name="Suleau A."/>
            <person name="Swennen D."/>
            <person name="Tekaia F."/>
            <person name="Wesolowski-Louvel M."/>
            <person name="Westhof E."/>
            <person name="Wirth B."/>
            <person name="Zeniou-Meyer M."/>
            <person name="Zivanovic Y."/>
            <person name="Bolotin-Fukuhara M."/>
            <person name="Thierry A."/>
            <person name="Bouchier C."/>
            <person name="Caudron B."/>
            <person name="Scarpelli C."/>
            <person name="Gaillardin C."/>
            <person name="Weissenbach J."/>
            <person name="Wincker P."/>
            <person name="Souciet J.-L."/>
        </authorList>
    </citation>
    <scope>NUCLEOTIDE SEQUENCE [LARGE SCALE GENOMIC DNA]</scope>
    <source>
        <strain>ATCC 2001 / BCRC 20586 / JCM 3761 / NBRC 0622 / NRRL Y-65 / CBS 138</strain>
    </source>
</reference>
<sequence length="565" mass="64679">MADQYVEVLGDLIGLLKDYKPGTITIENITKLCQSMGLESFIDELDNDISRLSTASKIIVIDIDYNKTQSTVQDVKLVLASNFDNFDYSNEQLEEAGDKQSNILLNSLTNYDSLKQFHHNLEFLYLLDTYSSVESDNQISSGNNLGSGNGTNGSSLTNKTDKKSVSSGNGLDSKLNEGKLNLFKYFRELKKYINTFFKESCDNRFKVVANVDNRFGLYIYETHGYSMRSRPLAKVYFERAKVPQQRFYEYIYSSETGSWINENSENYSVGVNLILEVNFDDTDEDVFWFPKEFVPTDLFIDEKDQLTSRKVSDVLCHAFYELGSSKKQTIELMNDFTTDLIQIRRFNINNDNLDLIADILNWTIWYRTVLRPIYLKLVSSISDDDDQHIRADIANTKDEFTVENTNPEIMKGPTNKNASFMQRNSMSLQRRRRSSNKAKRPSMSEAVVFKDEGLQQFSLHEIMADTTTEPDQKPDNLNISNNSESFIGQQELMEGSNIINDDKMDIDEEAINDDDSDSQSGEEGNIPVLLVNEDHVSFKGLGSCSFYDDKDKWAKFVEDLFNVFS</sequence>
<protein>
    <recommendedName>
        <fullName>Mediator of RNA polymerase II transcription subunit 1</fullName>
    </recommendedName>
    <alternativeName>
        <fullName>Mediator complex subunit 1</fullName>
    </alternativeName>
</protein>